<sequence>MAEITAAAVKALRERTGAGMMDCKKALNEANGEMEAAVDWLRAKGLAAAAKKSGRQAAEGLVGVMIDGTKGAVLEVNSETDFVAKNEKFQDFVKGVTALVLEHGSDIDTLSKAPHPAGGSVNDVLTANIATIGENQALRRAALLEVENGVVVPYIHNQVAPGVGKIGVLVALESEAPSDFLESLGKQIAMHVAAATPLALDEDSLDDAAVERERAIAQEKAAESGKPAEIVTRMVEGAVAKYRKENALLSQIFVVDGKTRVSDVVSKAAKETGKPITLKQFVRFQLGEGIEKQETDFAAEVAAAAGV</sequence>
<feature type="chain" id="PRO_0000161242" description="Elongation factor Ts">
    <location>
        <begin position="1"/>
        <end position="307"/>
    </location>
</feature>
<feature type="region of interest" description="Involved in Mg(2+) ion dislocation from EF-Tu" evidence="1">
    <location>
        <begin position="80"/>
        <end position="83"/>
    </location>
</feature>
<feature type="sequence conflict" description="In Ref. 1; AAD29655." evidence="2" ref="1">
    <original>D</original>
    <variation>A</variation>
    <location>
        <position position="91"/>
    </location>
</feature>
<feature type="sequence conflict" description="In Ref. 1; AAD29655." evidence="2" ref="1">
    <original>E</original>
    <variation>K</variation>
    <location>
        <position position="134"/>
    </location>
</feature>
<feature type="sequence conflict" description="In Ref. 1; AAD29655." evidence="2" ref="1">
    <original>H</original>
    <variation>Y</variation>
    <location>
        <position position="156"/>
    </location>
</feature>
<protein>
    <recommendedName>
        <fullName>Elongation factor Ts</fullName>
        <shortName>EF-Ts</shortName>
    </recommendedName>
</protein>
<accession>Q9X5E8</accession>
<accession>Q5NND1</accession>
<name>EFTS_ZYMMO</name>
<keyword id="KW-0963">Cytoplasm</keyword>
<keyword id="KW-0251">Elongation factor</keyword>
<keyword id="KW-0648">Protein biosynthesis</keyword>
<keyword id="KW-1185">Reference proteome</keyword>
<organism>
    <name type="scientific">Zymomonas mobilis subsp. mobilis (strain ATCC 31821 / ZM4 / CP4)</name>
    <dbReference type="NCBI Taxonomy" id="264203"/>
    <lineage>
        <taxon>Bacteria</taxon>
        <taxon>Pseudomonadati</taxon>
        <taxon>Pseudomonadota</taxon>
        <taxon>Alphaproteobacteria</taxon>
        <taxon>Sphingomonadales</taxon>
        <taxon>Zymomonadaceae</taxon>
        <taxon>Zymomonas</taxon>
    </lineage>
</organism>
<dbReference type="EMBL" id="AF124757">
    <property type="protein sequence ID" value="AAD29655.1"/>
    <property type="molecule type" value="Genomic_DNA"/>
</dbReference>
<dbReference type="EMBL" id="AE008692">
    <property type="protein sequence ID" value="AAV89779.1"/>
    <property type="molecule type" value="Genomic_DNA"/>
</dbReference>
<dbReference type="RefSeq" id="WP_011240982.1">
    <property type="nucleotide sequence ID" value="NZ_CP035711.1"/>
</dbReference>
<dbReference type="SMR" id="Q9X5E8"/>
<dbReference type="STRING" id="264203.ZMO1155"/>
<dbReference type="KEGG" id="zmo:ZMO1155"/>
<dbReference type="eggNOG" id="COG0264">
    <property type="taxonomic scope" value="Bacteria"/>
</dbReference>
<dbReference type="HOGENOM" id="CLU_047155_2_0_5"/>
<dbReference type="Proteomes" id="UP000001173">
    <property type="component" value="Chromosome"/>
</dbReference>
<dbReference type="GO" id="GO:0005737">
    <property type="term" value="C:cytoplasm"/>
    <property type="evidence" value="ECO:0007669"/>
    <property type="project" value="UniProtKB-SubCell"/>
</dbReference>
<dbReference type="GO" id="GO:0003746">
    <property type="term" value="F:translation elongation factor activity"/>
    <property type="evidence" value="ECO:0007669"/>
    <property type="project" value="UniProtKB-UniRule"/>
</dbReference>
<dbReference type="CDD" id="cd14275">
    <property type="entry name" value="UBA_EF-Ts"/>
    <property type="match status" value="1"/>
</dbReference>
<dbReference type="FunFam" id="1.10.8.10:FF:000001">
    <property type="entry name" value="Elongation factor Ts"/>
    <property type="match status" value="1"/>
</dbReference>
<dbReference type="Gene3D" id="1.10.286.20">
    <property type="match status" value="1"/>
</dbReference>
<dbReference type="Gene3D" id="1.10.8.10">
    <property type="entry name" value="DNA helicase RuvA subunit, C-terminal domain"/>
    <property type="match status" value="1"/>
</dbReference>
<dbReference type="Gene3D" id="3.30.479.20">
    <property type="entry name" value="Elongation factor Ts, dimerisation domain"/>
    <property type="match status" value="2"/>
</dbReference>
<dbReference type="HAMAP" id="MF_00050">
    <property type="entry name" value="EF_Ts"/>
    <property type="match status" value="1"/>
</dbReference>
<dbReference type="InterPro" id="IPR036402">
    <property type="entry name" value="EF-Ts_dimer_sf"/>
</dbReference>
<dbReference type="InterPro" id="IPR001816">
    <property type="entry name" value="Transl_elong_EFTs/EF1B"/>
</dbReference>
<dbReference type="InterPro" id="IPR014039">
    <property type="entry name" value="Transl_elong_EFTs/EF1B_dimer"/>
</dbReference>
<dbReference type="InterPro" id="IPR018101">
    <property type="entry name" value="Transl_elong_Ts_CS"/>
</dbReference>
<dbReference type="InterPro" id="IPR009060">
    <property type="entry name" value="UBA-like_sf"/>
</dbReference>
<dbReference type="NCBIfam" id="TIGR00116">
    <property type="entry name" value="tsf"/>
    <property type="match status" value="1"/>
</dbReference>
<dbReference type="PANTHER" id="PTHR11741">
    <property type="entry name" value="ELONGATION FACTOR TS"/>
    <property type="match status" value="1"/>
</dbReference>
<dbReference type="PANTHER" id="PTHR11741:SF0">
    <property type="entry name" value="ELONGATION FACTOR TS, MITOCHONDRIAL"/>
    <property type="match status" value="1"/>
</dbReference>
<dbReference type="Pfam" id="PF00889">
    <property type="entry name" value="EF_TS"/>
    <property type="match status" value="1"/>
</dbReference>
<dbReference type="SUPFAM" id="SSF54713">
    <property type="entry name" value="Elongation factor Ts (EF-Ts), dimerisation domain"/>
    <property type="match status" value="1"/>
</dbReference>
<dbReference type="SUPFAM" id="SSF46934">
    <property type="entry name" value="UBA-like"/>
    <property type="match status" value="1"/>
</dbReference>
<dbReference type="PROSITE" id="PS01126">
    <property type="entry name" value="EF_TS_1"/>
    <property type="match status" value="1"/>
</dbReference>
<dbReference type="PROSITE" id="PS01127">
    <property type="entry name" value="EF_TS_2"/>
    <property type="match status" value="1"/>
</dbReference>
<comment type="function">
    <text evidence="1">Associates with the EF-Tu.GDP complex and induces the exchange of GDP to GTP. It remains bound to the aminoacyl-tRNA.EF-Tu.GTP complex up to the GTP hydrolysis stage on the ribosome (By similarity).</text>
</comment>
<comment type="subcellular location">
    <subcellularLocation>
        <location evidence="1">Cytoplasm</location>
    </subcellularLocation>
</comment>
<comment type="similarity">
    <text evidence="2">Belongs to the EF-Ts family.</text>
</comment>
<gene>
    <name type="primary">tsf</name>
    <name type="ordered locus">ZMO1155</name>
</gene>
<proteinExistence type="inferred from homology"/>
<reference key="1">
    <citation type="submission" date="1999-01" db="EMBL/GenBank/DDBJ databases">
        <authorList>
            <person name="Lee H.J."/>
            <person name="Kang H.S."/>
        </authorList>
    </citation>
    <scope>NUCLEOTIDE SEQUENCE [GENOMIC DNA]</scope>
    <source>
        <strain>ATCC 31821 / ZM4 / CP4</strain>
    </source>
</reference>
<reference key="2">
    <citation type="journal article" date="2005" name="Nat. Biotechnol.">
        <title>The genome sequence of the ethanologenic bacterium Zymomonas mobilis ZM4.</title>
        <authorList>
            <person name="Seo J.-S."/>
            <person name="Chong H."/>
            <person name="Park H.S."/>
            <person name="Yoon K.-O."/>
            <person name="Jung C."/>
            <person name="Kim J.J."/>
            <person name="Hong J.H."/>
            <person name="Kim H."/>
            <person name="Kim J.-H."/>
            <person name="Kil J.-I."/>
            <person name="Park C.J."/>
            <person name="Oh H.-M."/>
            <person name="Lee J.-S."/>
            <person name="Jin S.-J."/>
            <person name="Um H.-W."/>
            <person name="Lee H.-J."/>
            <person name="Oh S.-J."/>
            <person name="Kim J.Y."/>
            <person name="Kang H.L."/>
            <person name="Lee S.Y."/>
            <person name="Lee K.J."/>
            <person name="Kang H.S."/>
        </authorList>
    </citation>
    <scope>NUCLEOTIDE SEQUENCE [LARGE SCALE GENOMIC DNA]</scope>
    <source>
        <strain>ATCC 31821 / ZM4 / CP4</strain>
    </source>
</reference>
<evidence type="ECO:0000250" key="1"/>
<evidence type="ECO:0000305" key="2"/>